<gene>
    <name evidence="1" type="primary">gatC</name>
    <name type="ordered locus">AFE_2112</name>
</gene>
<proteinExistence type="inferred from homology"/>
<feature type="chain" id="PRO_1000117625" description="Aspartyl/glutamyl-tRNA(Asn/Gln) amidotransferase subunit C">
    <location>
        <begin position="1"/>
        <end position="95"/>
    </location>
</feature>
<reference key="1">
    <citation type="journal article" date="2008" name="BMC Genomics">
        <title>Acidithiobacillus ferrooxidans metabolism: from genome sequence to industrial applications.</title>
        <authorList>
            <person name="Valdes J."/>
            <person name="Pedroso I."/>
            <person name="Quatrini R."/>
            <person name="Dodson R.J."/>
            <person name="Tettelin H."/>
            <person name="Blake R. II"/>
            <person name="Eisen J.A."/>
            <person name="Holmes D.S."/>
        </authorList>
    </citation>
    <scope>NUCLEOTIDE SEQUENCE [LARGE SCALE GENOMIC DNA]</scope>
    <source>
        <strain>ATCC 23270 / DSM 14882 / CIP 104768 / NCIMB 8455</strain>
    </source>
</reference>
<organism>
    <name type="scientific">Acidithiobacillus ferrooxidans (strain ATCC 23270 / DSM 14882 / CIP 104768 / NCIMB 8455)</name>
    <name type="common">Ferrobacillus ferrooxidans (strain ATCC 23270)</name>
    <dbReference type="NCBI Taxonomy" id="243159"/>
    <lineage>
        <taxon>Bacteria</taxon>
        <taxon>Pseudomonadati</taxon>
        <taxon>Pseudomonadota</taxon>
        <taxon>Acidithiobacillia</taxon>
        <taxon>Acidithiobacillales</taxon>
        <taxon>Acidithiobacillaceae</taxon>
        <taxon>Acidithiobacillus</taxon>
    </lineage>
</organism>
<comment type="function">
    <text evidence="1">Allows the formation of correctly charged Asn-tRNA(Asn) or Gln-tRNA(Gln) through the transamidation of misacylated Asp-tRNA(Asn) or Glu-tRNA(Gln) in organisms which lack either or both of asparaginyl-tRNA or glutaminyl-tRNA synthetases. The reaction takes place in the presence of glutamine and ATP through an activated phospho-Asp-tRNA(Asn) or phospho-Glu-tRNA(Gln).</text>
</comment>
<comment type="catalytic activity">
    <reaction evidence="1">
        <text>L-glutamyl-tRNA(Gln) + L-glutamine + ATP + H2O = L-glutaminyl-tRNA(Gln) + L-glutamate + ADP + phosphate + H(+)</text>
        <dbReference type="Rhea" id="RHEA:17521"/>
        <dbReference type="Rhea" id="RHEA-COMP:9681"/>
        <dbReference type="Rhea" id="RHEA-COMP:9684"/>
        <dbReference type="ChEBI" id="CHEBI:15377"/>
        <dbReference type="ChEBI" id="CHEBI:15378"/>
        <dbReference type="ChEBI" id="CHEBI:29985"/>
        <dbReference type="ChEBI" id="CHEBI:30616"/>
        <dbReference type="ChEBI" id="CHEBI:43474"/>
        <dbReference type="ChEBI" id="CHEBI:58359"/>
        <dbReference type="ChEBI" id="CHEBI:78520"/>
        <dbReference type="ChEBI" id="CHEBI:78521"/>
        <dbReference type="ChEBI" id="CHEBI:456216"/>
    </reaction>
</comment>
<comment type="catalytic activity">
    <reaction evidence="1">
        <text>L-aspartyl-tRNA(Asn) + L-glutamine + ATP + H2O = L-asparaginyl-tRNA(Asn) + L-glutamate + ADP + phosphate + 2 H(+)</text>
        <dbReference type="Rhea" id="RHEA:14513"/>
        <dbReference type="Rhea" id="RHEA-COMP:9674"/>
        <dbReference type="Rhea" id="RHEA-COMP:9677"/>
        <dbReference type="ChEBI" id="CHEBI:15377"/>
        <dbReference type="ChEBI" id="CHEBI:15378"/>
        <dbReference type="ChEBI" id="CHEBI:29985"/>
        <dbReference type="ChEBI" id="CHEBI:30616"/>
        <dbReference type="ChEBI" id="CHEBI:43474"/>
        <dbReference type="ChEBI" id="CHEBI:58359"/>
        <dbReference type="ChEBI" id="CHEBI:78515"/>
        <dbReference type="ChEBI" id="CHEBI:78516"/>
        <dbReference type="ChEBI" id="CHEBI:456216"/>
    </reaction>
</comment>
<comment type="subunit">
    <text evidence="1">Heterotrimer of A, B and C subunits.</text>
</comment>
<comment type="similarity">
    <text evidence="1">Belongs to the GatC family.</text>
</comment>
<accession>B7J4X0</accession>
<evidence type="ECO:0000255" key="1">
    <source>
        <dbReference type="HAMAP-Rule" id="MF_00122"/>
    </source>
</evidence>
<dbReference type="EC" id="6.3.5.-" evidence="1"/>
<dbReference type="EMBL" id="CP001219">
    <property type="protein sequence ID" value="ACK79696.1"/>
    <property type="molecule type" value="Genomic_DNA"/>
</dbReference>
<dbReference type="RefSeq" id="WP_012536980.1">
    <property type="nucleotide sequence ID" value="NC_011761.1"/>
</dbReference>
<dbReference type="SMR" id="B7J4X0"/>
<dbReference type="STRING" id="243159.AFE_2112"/>
<dbReference type="PaxDb" id="243159-AFE_2112"/>
<dbReference type="GeneID" id="65281238"/>
<dbReference type="KEGG" id="afr:AFE_2112"/>
<dbReference type="eggNOG" id="COG0721">
    <property type="taxonomic scope" value="Bacteria"/>
</dbReference>
<dbReference type="HOGENOM" id="CLU_105899_2_2_6"/>
<dbReference type="Proteomes" id="UP000001362">
    <property type="component" value="Chromosome"/>
</dbReference>
<dbReference type="GO" id="GO:0050566">
    <property type="term" value="F:asparaginyl-tRNA synthase (glutamine-hydrolyzing) activity"/>
    <property type="evidence" value="ECO:0007669"/>
    <property type="project" value="RHEA"/>
</dbReference>
<dbReference type="GO" id="GO:0005524">
    <property type="term" value="F:ATP binding"/>
    <property type="evidence" value="ECO:0007669"/>
    <property type="project" value="UniProtKB-KW"/>
</dbReference>
<dbReference type="GO" id="GO:0050567">
    <property type="term" value="F:glutaminyl-tRNA synthase (glutamine-hydrolyzing) activity"/>
    <property type="evidence" value="ECO:0007669"/>
    <property type="project" value="UniProtKB-UniRule"/>
</dbReference>
<dbReference type="GO" id="GO:0070681">
    <property type="term" value="P:glutaminyl-tRNAGln biosynthesis via transamidation"/>
    <property type="evidence" value="ECO:0007669"/>
    <property type="project" value="TreeGrafter"/>
</dbReference>
<dbReference type="GO" id="GO:0006450">
    <property type="term" value="P:regulation of translational fidelity"/>
    <property type="evidence" value="ECO:0007669"/>
    <property type="project" value="InterPro"/>
</dbReference>
<dbReference type="GO" id="GO:0006412">
    <property type="term" value="P:translation"/>
    <property type="evidence" value="ECO:0007669"/>
    <property type="project" value="UniProtKB-UniRule"/>
</dbReference>
<dbReference type="Gene3D" id="1.10.20.60">
    <property type="entry name" value="Glu-tRNAGln amidotransferase C subunit, N-terminal domain"/>
    <property type="match status" value="1"/>
</dbReference>
<dbReference type="HAMAP" id="MF_00122">
    <property type="entry name" value="GatC"/>
    <property type="match status" value="1"/>
</dbReference>
<dbReference type="InterPro" id="IPR036113">
    <property type="entry name" value="Asp/Glu-ADT_sf_sub_c"/>
</dbReference>
<dbReference type="InterPro" id="IPR003837">
    <property type="entry name" value="GatC"/>
</dbReference>
<dbReference type="NCBIfam" id="TIGR00135">
    <property type="entry name" value="gatC"/>
    <property type="match status" value="1"/>
</dbReference>
<dbReference type="PANTHER" id="PTHR15004">
    <property type="entry name" value="GLUTAMYL-TRNA(GLN) AMIDOTRANSFERASE SUBUNIT C, MITOCHONDRIAL"/>
    <property type="match status" value="1"/>
</dbReference>
<dbReference type="PANTHER" id="PTHR15004:SF0">
    <property type="entry name" value="GLUTAMYL-TRNA(GLN) AMIDOTRANSFERASE SUBUNIT C, MITOCHONDRIAL"/>
    <property type="match status" value="1"/>
</dbReference>
<dbReference type="Pfam" id="PF02686">
    <property type="entry name" value="GatC"/>
    <property type="match status" value="1"/>
</dbReference>
<dbReference type="SUPFAM" id="SSF141000">
    <property type="entry name" value="Glu-tRNAGln amidotransferase C subunit"/>
    <property type="match status" value="1"/>
</dbReference>
<name>GATC_ACIF2</name>
<keyword id="KW-0067">ATP-binding</keyword>
<keyword id="KW-0436">Ligase</keyword>
<keyword id="KW-0547">Nucleotide-binding</keyword>
<keyword id="KW-0648">Protein biosynthesis</keyword>
<keyword id="KW-1185">Reference proteome</keyword>
<protein>
    <recommendedName>
        <fullName evidence="1">Aspartyl/glutamyl-tRNA(Asn/Gln) amidotransferase subunit C</fullName>
        <shortName evidence="1">Asp/Glu-ADT subunit C</shortName>
        <ecNumber evidence="1">6.3.5.-</ecNumber>
    </recommendedName>
</protein>
<sequence length="95" mass="10583">MAFDQDTVRRTAHLARIALPQAEIPAVADQLERIMGLVEELRAIETTDVPIMAHPLDLDQPLRPDMVVHQDQREVLMASAPAAEHGLFLVPKVIE</sequence>